<evidence type="ECO:0000250" key="1">
    <source>
        <dbReference type="UniProtKB" id="I6TCK3"/>
    </source>
</evidence>
<evidence type="ECO:0000269" key="2">
    <source>
    </source>
</evidence>
<evidence type="ECO:0000303" key="3">
    <source>
    </source>
</evidence>
<evidence type="ECO:0000305" key="4"/>
<evidence type="ECO:0000305" key="5">
    <source>
    </source>
</evidence>
<organism>
    <name type="scientific">Pseudomonas aeruginosa (strain ATCC 15692 / DSM 22644 / CIP 104116 / JCM 14847 / LMG 12228 / 1C / PRS 101 / PAO1)</name>
    <dbReference type="NCBI Taxonomy" id="208964"/>
    <lineage>
        <taxon>Bacteria</taxon>
        <taxon>Pseudomonadati</taxon>
        <taxon>Pseudomonadota</taxon>
        <taxon>Gammaproteobacteria</taxon>
        <taxon>Pseudomonadales</taxon>
        <taxon>Pseudomonadaceae</taxon>
        <taxon>Pseudomonas</taxon>
    </lineage>
</organism>
<gene>
    <name evidence="3" type="primary">nirG</name>
    <name type="ordered locus">PA0513</name>
</gene>
<feature type="chain" id="PRO_0000287794" description="Siroheme decarboxylase NirG subunit">
    <location>
        <begin position="1"/>
        <end position="147"/>
    </location>
</feature>
<dbReference type="EC" id="4.1.1.111" evidence="1"/>
<dbReference type="EMBL" id="D84475">
    <property type="protein sequence ID" value="BAA12679.1"/>
    <property type="molecule type" value="Genomic_DNA"/>
</dbReference>
<dbReference type="EMBL" id="AE004091">
    <property type="protein sequence ID" value="AAG03902.1"/>
    <property type="molecule type" value="Genomic_DNA"/>
</dbReference>
<dbReference type="PIR" id="E83581">
    <property type="entry name" value="E83581"/>
</dbReference>
<dbReference type="RefSeq" id="NP_249204.1">
    <property type="nucleotide sequence ID" value="NC_002516.2"/>
</dbReference>
<dbReference type="RefSeq" id="WP_003084860.1">
    <property type="nucleotide sequence ID" value="NZ_QZGE01000010.1"/>
</dbReference>
<dbReference type="SMR" id="P95414"/>
<dbReference type="STRING" id="208964.PA0513"/>
<dbReference type="PaxDb" id="208964-PA0513"/>
<dbReference type="DNASU" id="877708"/>
<dbReference type="GeneID" id="877708"/>
<dbReference type="KEGG" id="pae:PA0513"/>
<dbReference type="PATRIC" id="fig|208964.12.peg.543"/>
<dbReference type="PseudoCAP" id="PA0513"/>
<dbReference type="HOGENOM" id="CLU_112007_1_0_6"/>
<dbReference type="InParanoid" id="P95414"/>
<dbReference type="OrthoDB" id="9806536at2"/>
<dbReference type="PhylomeDB" id="P95414"/>
<dbReference type="BioCyc" id="PAER208964:G1FZ6-518-MONOMER"/>
<dbReference type="Proteomes" id="UP000002438">
    <property type="component" value="Chromosome"/>
</dbReference>
<dbReference type="GO" id="GO:0016829">
    <property type="term" value="F:lyase activity"/>
    <property type="evidence" value="ECO:0007669"/>
    <property type="project" value="UniProtKB-KW"/>
</dbReference>
<dbReference type="GO" id="GO:0006783">
    <property type="term" value="P:heme biosynthetic process"/>
    <property type="evidence" value="ECO:0000315"/>
    <property type="project" value="PseudoCAP"/>
</dbReference>
<dbReference type="FunFam" id="3.30.70.3460:FF:000001">
    <property type="entry name" value="Heme d1 biosynthesis protein NirG"/>
    <property type="match status" value="1"/>
</dbReference>
<dbReference type="FunFam" id="1.10.10.10:FF:000798">
    <property type="entry name" value="Protein nirG"/>
    <property type="match status" value="1"/>
</dbReference>
<dbReference type="Gene3D" id="3.30.70.3460">
    <property type="match status" value="1"/>
</dbReference>
<dbReference type="Gene3D" id="1.10.10.10">
    <property type="entry name" value="Winged helix-like DNA-binding domain superfamily/Winged helix DNA-binding domain"/>
    <property type="match status" value="1"/>
</dbReference>
<dbReference type="InterPro" id="IPR040523">
    <property type="entry name" value="AsnC_trans_reg2"/>
</dbReference>
<dbReference type="InterPro" id="IPR050684">
    <property type="entry name" value="HTH-Siroheme_Decarb"/>
</dbReference>
<dbReference type="InterPro" id="IPR053953">
    <property type="entry name" value="NirdL-like_HTH"/>
</dbReference>
<dbReference type="InterPro" id="IPR036388">
    <property type="entry name" value="WH-like_DNA-bd_sf"/>
</dbReference>
<dbReference type="PANTHER" id="PTHR43413:SF1">
    <property type="entry name" value="SIROHEME DECARBOXYLASE NIRL SUBUNIT"/>
    <property type="match status" value="1"/>
</dbReference>
<dbReference type="PANTHER" id="PTHR43413">
    <property type="entry name" value="TRANSCRIPTIONAL REGULATOR, ASNC FAMILY"/>
    <property type="match status" value="1"/>
</dbReference>
<dbReference type="Pfam" id="PF17805">
    <property type="entry name" value="AsnC_trans_reg2"/>
    <property type="match status" value="1"/>
</dbReference>
<dbReference type="Pfam" id="PF22451">
    <property type="entry name" value="NirdL-like_HTH"/>
    <property type="match status" value="1"/>
</dbReference>
<comment type="function">
    <text evidence="1 2">Involved in heme d1 biosynthesis (PubMed:8982003). Catalyzes the decarboxylation of siroheme into didecarboxysiroheme (By similarity).</text>
</comment>
<comment type="catalytic activity">
    <reaction evidence="1">
        <text>siroheme + 2 H(+) = 12,18-didecarboxysiroheme + 2 CO2</text>
        <dbReference type="Rhea" id="RHEA:19093"/>
        <dbReference type="ChEBI" id="CHEBI:15378"/>
        <dbReference type="ChEBI" id="CHEBI:16526"/>
        <dbReference type="ChEBI" id="CHEBI:60052"/>
        <dbReference type="ChEBI" id="CHEBI:140497"/>
        <dbReference type="EC" id="4.1.1.111"/>
    </reaction>
</comment>
<comment type="pathway">
    <text evidence="5">Porphyrin-containing compound metabolism.</text>
</comment>
<comment type="subunit">
    <text evidence="1">Probably forms a complex composed of NirD, NirL, NirG and NirH. All proteins are required for the total conversion of siroheme to didecarboxysiroheme.</text>
</comment>
<comment type="disruption phenotype">
    <text evidence="2">The nirDLGH mutant lacks dissimilatory nitrite reductase (NIR) activity. The NIR activity is restored by adding purified heme d1.</text>
</comment>
<comment type="similarity">
    <text evidence="4">Belongs to the Ahb/Nir family.</text>
</comment>
<keyword id="KW-0456">Lyase</keyword>
<keyword id="KW-1185">Reference proteome</keyword>
<accession>P95414</accession>
<accession>Q7DCL4</accession>
<sequence>MDEFDRRLLNRLQHGLPLEPHPYALLAAELDCREEDILRRLDDLLDDGTLTRFGPLFDIEPLGGAFTLAAMSVPEARFEEIAALLAGWPQVAHNYRREHALNMWLVVACDSPAEVAETLARLERESGLAVLDLPKEATYHVGLHFPL</sequence>
<protein>
    <recommendedName>
        <fullName evidence="1">Siroheme decarboxylase NirG subunit</fullName>
        <ecNumber evidence="1">4.1.1.111</ecNumber>
    </recommendedName>
</protein>
<reference key="1">
    <citation type="journal article" date="1997" name="J. Bacteriol.">
        <title>Gene cluster for dissimilatory nitrite reductase (nir) from Pseudomonas aeruginosa: sequencing and identification of a locus for heme d1 biosynthesis.</title>
        <authorList>
            <person name="Kawasaki S."/>
            <person name="Arai H."/>
            <person name="Kodama T."/>
            <person name="Igarashi Y."/>
        </authorList>
    </citation>
    <scope>NUCLEOTIDE SEQUENCE [GENOMIC DNA]</scope>
    <scope>FUNCTION</scope>
    <scope>PATHWAY</scope>
    <scope>DISRUPTION PHENOTYPE</scope>
    <source>
        <strain>ATCC 15692 / DSM 22644 / CIP 104116 / JCM 14847 / LMG 12228 / 1C / PRS 101 / PAO1</strain>
    </source>
</reference>
<reference key="2">
    <citation type="journal article" date="2000" name="Nature">
        <title>Complete genome sequence of Pseudomonas aeruginosa PAO1, an opportunistic pathogen.</title>
        <authorList>
            <person name="Stover C.K."/>
            <person name="Pham X.-Q.T."/>
            <person name="Erwin A.L."/>
            <person name="Mizoguchi S.D."/>
            <person name="Warrener P."/>
            <person name="Hickey M.J."/>
            <person name="Brinkman F.S.L."/>
            <person name="Hufnagle W.O."/>
            <person name="Kowalik D.J."/>
            <person name="Lagrou M."/>
            <person name="Garber R.L."/>
            <person name="Goltry L."/>
            <person name="Tolentino E."/>
            <person name="Westbrock-Wadman S."/>
            <person name="Yuan Y."/>
            <person name="Brody L.L."/>
            <person name="Coulter S.N."/>
            <person name="Folger K.R."/>
            <person name="Kas A."/>
            <person name="Larbig K."/>
            <person name="Lim R.M."/>
            <person name="Smith K.A."/>
            <person name="Spencer D.H."/>
            <person name="Wong G.K.-S."/>
            <person name="Wu Z."/>
            <person name="Paulsen I.T."/>
            <person name="Reizer J."/>
            <person name="Saier M.H. Jr."/>
            <person name="Hancock R.E.W."/>
            <person name="Lory S."/>
            <person name="Olson M.V."/>
        </authorList>
    </citation>
    <scope>NUCLEOTIDE SEQUENCE [LARGE SCALE GENOMIC DNA]</scope>
    <source>
        <strain>ATCC 15692 / DSM 22644 / CIP 104116 / JCM 14847 / LMG 12228 / 1C / PRS 101 / PAO1</strain>
    </source>
</reference>
<proteinExistence type="inferred from homology"/>
<name>NIRG_PSEAE</name>